<protein>
    <recommendedName>
        <fullName evidence="10">Mitochondrial 2-oxoglutarate/malate carrier protein</fullName>
        <shortName evidence="9">OGCP</shortName>
        <shortName evidence="9">alpha-oxoglutarate carrier</shortName>
    </recommendedName>
    <alternativeName>
        <fullName>Solute carrier family 25 member 11</fullName>
        <shortName>SLC25A11</shortName>
    </alternativeName>
</protein>
<comment type="function">
    <text evidence="1 2 3 5">Catalyzes the transport of 2-oxoglutarate (alpha-oxoglutarate) across the inner mitochondrial membrane in an electroneutral exchange for malate. Can also exchange 2-oxoglutarate for other dicarboxylic acids such as malonate, succinate, maleate and oxaloacetate, although with lower affinity. Contributes to several metabolic processes, including the malate-aspartate shuttle, the oxoglutarate/isocitrate shuttle, in gluconeogenesis from lactate, and in nitrogen metabolism (By similarity). Maintains mitochondrial fusion and fission events, and the organization and morphology of cristae (PubMed:21448454). Involved in the regulation of apoptosis (By similarity). Helps protect from cytotoxic-induced apoptosis by modulating glutathione levels in mitochondria (By similarity).</text>
</comment>
<comment type="catalytic activity">
    <reaction evidence="1">
        <text>(S)-malate(in) + 2-oxoglutarate(out) = (S)-malate(out) + 2-oxoglutarate(in)</text>
        <dbReference type="Rhea" id="RHEA:71587"/>
        <dbReference type="ChEBI" id="CHEBI:15589"/>
        <dbReference type="ChEBI" id="CHEBI:16810"/>
    </reaction>
</comment>
<comment type="catalytic activity">
    <reaction evidence="1">
        <text>malonate(in) + 2-oxoglutarate(out) = malonate(out) + 2-oxoglutarate(in)</text>
        <dbReference type="Rhea" id="RHEA:71591"/>
        <dbReference type="ChEBI" id="CHEBI:15792"/>
        <dbReference type="ChEBI" id="CHEBI:16810"/>
    </reaction>
</comment>
<comment type="catalytic activity">
    <reaction evidence="1">
        <text>succinate(in) + 2-oxoglutarate(out) = succinate(out) + 2-oxoglutarate(in)</text>
        <dbReference type="Rhea" id="RHEA:71595"/>
        <dbReference type="ChEBI" id="CHEBI:16810"/>
        <dbReference type="ChEBI" id="CHEBI:30031"/>
    </reaction>
</comment>
<comment type="catalytic activity">
    <reaction evidence="1">
        <text>maleate(in) + 2-oxoglutarate(out) = maleate(out) + 2-oxoglutarate(in)</text>
        <dbReference type="Rhea" id="RHEA:71599"/>
        <dbReference type="ChEBI" id="CHEBI:16810"/>
        <dbReference type="ChEBI" id="CHEBI:30780"/>
    </reaction>
</comment>
<comment type="catalytic activity">
    <reaction evidence="1">
        <text>oxaloacetate(in) + 2-oxoglutarate(out) = oxaloacetate(out) + 2-oxoglutarate(in)</text>
        <dbReference type="Rhea" id="RHEA:71603"/>
        <dbReference type="ChEBI" id="CHEBI:16452"/>
        <dbReference type="ChEBI" id="CHEBI:16810"/>
    </reaction>
</comment>
<comment type="subunit">
    <text evidence="7">Interacts with SMIM26.</text>
</comment>
<comment type="interaction">
    <interactant intactId="EBI-359174">
        <id>Q02978</id>
    </interactant>
    <interactant intactId="EBI-2371423">
        <id>O43865</id>
        <label>AHCYL1</label>
    </interactant>
    <organismsDiffer>false</organismsDiffer>
    <experiments>3</experiments>
</comment>
<comment type="interaction">
    <interactant intactId="EBI-359174">
        <id>Q02978</id>
    </interactant>
    <interactant intactId="EBI-1049597">
        <id>P27797</id>
        <label>CALR</label>
    </interactant>
    <organismsDiffer>false</organismsDiffer>
    <experiments>3</experiments>
</comment>
<comment type="interaction">
    <interactant intactId="EBI-359174">
        <id>Q02978</id>
    </interactant>
    <interactant intactId="EBI-727477">
        <id>P12830</id>
        <label>CDH1</label>
    </interactant>
    <organismsDiffer>false</organismsDiffer>
    <experiments>3</experiments>
</comment>
<comment type="interaction">
    <interactant intactId="EBI-359174">
        <id>Q02978</id>
    </interactant>
    <interactant intactId="EBI-746189">
        <id>Q15078</id>
        <label>CDK5R1</label>
    </interactant>
    <organismsDiffer>false</organismsDiffer>
    <experiments>3</experiments>
</comment>
<comment type="interaction">
    <interactant intactId="EBI-359174">
        <id>Q02978</id>
    </interactant>
    <interactant intactId="EBI-351007">
        <id>P36957</id>
        <label>DLST</label>
    </interactant>
    <organismsDiffer>false</organismsDiffer>
    <experiments>3</experiments>
</comment>
<comment type="interaction">
    <interactant intactId="EBI-359174">
        <id>Q02978</id>
    </interactant>
    <interactant intactId="EBI-466029">
        <id>P42858</id>
        <label>HTT</label>
    </interactant>
    <organismsDiffer>false</organismsDiffer>
    <experiments>6</experiments>
</comment>
<comment type="interaction">
    <interactant intactId="EBI-359174">
        <id>Q02978</id>
    </interactant>
    <interactant intactId="EBI-1055945">
        <id>Q8TDX7</id>
        <label>NEK7</label>
    </interactant>
    <organismsDiffer>false</organismsDiffer>
    <experiments>3</experiments>
</comment>
<comment type="interaction">
    <interactant intactId="EBI-359174">
        <id>Q02978</id>
    </interactant>
    <interactant intactId="EBI-50428917">
        <id>A0A096LP01</id>
        <label>SMIM26</label>
    </interactant>
    <organismsDiffer>false</organismsDiffer>
    <experiments>12</experiments>
</comment>
<comment type="subcellular location">
    <subcellularLocation>
        <location evidence="2">Mitochondrion inner membrane</location>
        <topology evidence="2">Multi-pass membrane protein</topology>
    </subcellularLocation>
</comment>
<comment type="alternative products">
    <event type="alternative splicing"/>
    <isoform>
        <id>Q02978-1</id>
        <name>1</name>
        <sequence type="displayed"/>
    </isoform>
    <isoform>
        <id>Q02978-2</id>
        <name>2</name>
        <sequence type="described" ref="VSP_046745"/>
    </isoform>
</comment>
<comment type="tissue specificity">
    <text evidence="5">Most highly expressed in the heart.</text>
</comment>
<comment type="disease" evidence="6">
    <disease id="DI-05590">
        <name>Pheochromocytoma/paraganglioma syndrome 6</name>
        <acronym>PPGL6</acronym>
        <description>A form of pheochromocytoma/paraganglioma syndrome, a tumor predisposition syndrome characterized by the development of neuroendocrine tumors, usually in adulthood. Pheochromocytomas are catecholamine-producing tumors that arise from chromaffin cells in the adrenal medulla. Paragangliomas develop from sympathetic paraganglia in the thorax, abdomen, and pelvis, as well as from parasympathetic paraganglia in the head and neck. PPGL6 inheritance is autosomal dominant.</description>
        <dbReference type="MIM" id="618464"/>
    </disease>
    <text>Disease susceptibility is associated with variants affecting the gene represented in this entry.</text>
</comment>
<comment type="similarity">
    <text evidence="11">Belongs to the mitochondrial carrier (TC 2.A.29) family.</text>
</comment>
<proteinExistence type="evidence at protein level"/>
<accession>Q02978</accession>
<accession>F5GY65</accession>
<accession>O75537</accession>
<accession>Q969P7</accession>
<keyword id="KW-0007">Acetylation</keyword>
<keyword id="KW-0025">Alternative splicing</keyword>
<keyword id="KW-0050">Antiport</keyword>
<keyword id="KW-0903">Direct protein sequencing</keyword>
<keyword id="KW-0225">Disease variant</keyword>
<keyword id="KW-0445">Lipid transport</keyword>
<keyword id="KW-0472">Membrane</keyword>
<keyword id="KW-0496">Mitochondrion</keyword>
<keyword id="KW-0999">Mitochondrion inner membrane</keyword>
<keyword id="KW-0597">Phosphoprotein</keyword>
<keyword id="KW-1267">Proteomics identification</keyword>
<keyword id="KW-1185">Reference proteome</keyword>
<keyword id="KW-0677">Repeat</keyword>
<keyword id="KW-0812">Transmembrane</keyword>
<keyword id="KW-1133">Transmembrane helix</keyword>
<keyword id="KW-0813">Transport</keyword>
<organism>
    <name type="scientific">Homo sapiens</name>
    <name type="common">Human</name>
    <dbReference type="NCBI Taxonomy" id="9606"/>
    <lineage>
        <taxon>Eukaryota</taxon>
        <taxon>Metazoa</taxon>
        <taxon>Chordata</taxon>
        <taxon>Craniata</taxon>
        <taxon>Vertebrata</taxon>
        <taxon>Euteleostomi</taxon>
        <taxon>Mammalia</taxon>
        <taxon>Eutheria</taxon>
        <taxon>Euarchontoglires</taxon>
        <taxon>Primates</taxon>
        <taxon>Haplorrhini</taxon>
        <taxon>Catarrhini</taxon>
        <taxon>Hominidae</taxon>
        <taxon>Homo</taxon>
    </lineage>
</organism>
<dbReference type="EMBL" id="X66114">
    <property type="protein sequence ID" value="CAA46905.1"/>
    <property type="molecule type" value="Genomic_DNA"/>
</dbReference>
<dbReference type="EMBL" id="AF070548">
    <property type="protein sequence ID" value="AAC28637.1"/>
    <property type="molecule type" value="mRNA"/>
</dbReference>
<dbReference type="EMBL" id="AC004771">
    <property type="status" value="NOT_ANNOTATED_CDS"/>
    <property type="molecule type" value="Genomic_DNA"/>
</dbReference>
<dbReference type="EMBL" id="BC006508">
    <property type="protein sequence ID" value="AAH06508.1"/>
    <property type="molecule type" value="mRNA"/>
</dbReference>
<dbReference type="EMBL" id="BC006519">
    <property type="protein sequence ID" value="AAH06519.1"/>
    <property type="molecule type" value="mRNA"/>
</dbReference>
<dbReference type="EMBL" id="BC016294">
    <property type="protein sequence ID" value="AAH16294.1"/>
    <property type="molecule type" value="mRNA"/>
</dbReference>
<dbReference type="EMBL" id="BC017170">
    <property type="protein sequence ID" value="AAH17170.1"/>
    <property type="molecule type" value="mRNA"/>
</dbReference>
<dbReference type="CCDS" id="CCDS11059.1">
    <molecule id="Q02978-1"/>
</dbReference>
<dbReference type="CCDS" id="CCDS54069.1">
    <molecule id="Q02978-2"/>
</dbReference>
<dbReference type="PIR" id="A56650">
    <property type="entry name" value="A56650"/>
</dbReference>
<dbReference type="RefSeq" id="NP_001158890.1">
    <molecule id="Q02978-2"/>
    <property type="nucleotide sequence ID" value="NM_001165418.2"/>
</dbReference>
<dbReference type="RefSeq" id="NP_003553.2">
    <molecule id="Q02978-1"/>
    <property type="nucleotide sequence ID" value="NM_003562.4"/>
</dbReference>
<dbReference type="SMR" id="Q02978"/>
<dbReference type="BioGRID" id="113990">
    <property type="interactions" value="257"/>
</dbReference>
<dbReference type="FunCoup" id="Q02978">
    <property type="interactions" value="1944"/>
</dbReference>
<dbReference type="IntAct" id="Q02978">
    <property type="interactions" value="107"/>
</dbReference>
<dbReference type="MINT" id="Q02978"/>
<dbReference type="STRING" id="9606.ENSP00000225665"/>
<dbReference type="TCDB" id="2.A.29.2.13">
    <property type="family name" value="the mitochondrial carrier (mc) family"/>
</dbReference>
<dbReference type="CarbonylDB" id="Q02978"/>
<dbReference type="GlyGen" id="Q02978">
    <property type="glycosylation" value="2 sites, 1 O-linked glycan (2 sites)"/>
</dbReference>
<dbReference type="iPTMnet" id="Q02978"/>
<dbReference type="MetOSite" id="Q02978"/>
<dbReference type="PhosphoSitePlus" id="Q02978"/>
<dbReference type="SwissPalm" id="Q02978"/>
<dbReference type="BioMuta" id="SLC25A11"/>
<dbReference type="DMDM" id="20141580"/>
<dbReference type="jPOST" id="Q02978"/>
<dbReference type="MassIVE" id="Q02978"/>
<dbReference type="PaxDb" id="9606-ENSP00000225665"/>
<dbReference type="PeptideAtlas" id="Q02978"/>
<dbReference type="ProteomicsDB" id="24639"/>
<dbReference type="ProteomicsDB" id="58148">
    <molecule id="Q02978-1"/>
</dbReference>
<dbReference type="Pumba" id="Q02978"/>
<dbReference type="TopDownProteomics" id="Q02978-1">
    <molecule id="Q02978-1"/>
</dbReference>
<dbReference type="Antibodypedia" id="11377">
    <property type="antibodies" value="216 antibodies from 29 providers"/>
</dbReference>
<dbReference type="DNASU" id="8402"/>
<dbReference type="Ensembl" id="ENST00000225665.12">
    <molecule id="Q02978-1"/>
    <property type="protein sequence ID" value="ENSP00000225665.7"/>
    <property type="gene ID" value="ENSG00000108528.14"/>
</dbReference>
<dbReference type="Ensembl" id="ENST00000544061.6">
    <molecule id="Q02978-2"/>
    <property type="protein sequence ID" value="ENSP00000440804.2"/>
    <property type="gene ID" value="ENSG00000108528.14"/>
</dbReference>
<dbReference type="GeneID" id="8402"/>
<dbReference type="KEGG" id="hsa:8402"/>
<dbReference type="MANE-Select" id="ENST00000225665.12">
    <property type="protein sequence ID" value="ENSP00000225665.7"/>
    <property type="RefSeq nucleotide sequence ID" value="NM_003562.5"/>
    <property type="RefSeq protein sequence ID" value="NP_003553.2"/>
</dbReference>
<dbReference type="UCSC" id="uc021toe.2">
    <molecule id="Q02978-1"/>
    <property type="organism name" value="human"/>
</dbReference>
<dbReference type="AGR" id="HGNC:10981"/>
<dbReference type="CTD" id="8402"/>
<dbReference type="DisGeNET" id="8402"/>
<dbReference type="GeneCards" id="SLC25A11"/>
<dbReference type="HGNC" id="HGNC:10981">
    <property type="gene designation" value="SLC25A11"/>
</dbReference>
<dbReference type="HPA" id="ENSG00000108528">
    <property type="expression patterns" value="Group enriched (heart muscle, skeletal muscle, tongue)"/>
</dbReference>
<dbReference type="MalaCards" id="SLC25A11"/>
<dbReference type="MIM" id="604165">
    <property type="type" value="gene"/>
</dbReference>
<dbReference type="MIM" id="618464">
    <property type="type" value="phenotype"/>
</dbReference>
<dbReference type="neXtProt" id="NX_Q02978"/>
<dbReference type="OpenTargets" id="ENSG00000108528"/>
<dbReference type="Orphanet" id="29072">
    <property type="disease" value="Hereditary pheochromocytoma-paraganglioma"/>
</dbReference>
<dbReference type="PharmGKB" id="PA35857"/>
<dbReference type="VEuPathDB" id="HostDB:ENSG00000108528"/>
<dbReference type="eggNOG" id="KOG0759">
    <property type="taxonomic scope" value="Eukaryota"/>
</dbReference>
<dbReference type="GeneTree" id="ENSGT00940000158465"/>
<dbReference type="HOGENOM" id="CLU_015166_14_1_1"/>
<dbReference type="InParanoid" id="Q02978"/>
<dbReference type="OMA" id="TLWRGAI"/>
<dbReference type="OrthoDB" id="448427at2759"/>
<dbReference type="PAN-GO" id="Q02978">
    <property type="GO annotations" value="12 GO annotations based on evolutionary models"/>
</dbReference>
<dbReference type="PhylomeDB" id="Q02978"/>
<dbReference type="TreeFam" id="TF354262"/>
<dbReference type="PathwayCommons" id="Q02978"/>
<dbReference type="Reactome" id="R-HSA-428643">
    <property type="pathway name" value="Organic anion transporters"/>
</dbReference>
<dbReference type="Reactome" id="R-HSA-9856872">
    <property type="pathway name" value="Malate-aspartate shuttle"/>
</dbReference>
<dbReference type="SignaLink" id="Q02978"/>
<dbReference type="BioGRID-ORCS" id="8402">
    <property type="hits" value="14 hits in 1154 CRISPR screens"/>
</dbReference>
<dbReference type="CD-CODE" id="91857CE7">
    <property type="entry name" value="Nucleolus"/>
</dbReference>
<dbReference type="CD-CODE" id="FB4E32DD">
    <property type="entry name" value="Presynaptic clusters and postsynaptic densities"/>
</dbReference>
<dbReference type="ChiTaRS" id="SLC25A11">
    <property type="organism name" value="human"/>
</dbReference>
<dbReference type="GeneWiki" id="SLC25A11"/>
<dbReference type="GenomeRNAi" id="8402"/>
<dbReference type="Pharos" id="Q02978">
    <property type="development level" value="Tbio"/>
</dbReference>
<dbReference type="PRO" id="PR:Q02978"/>
<dbReference type="Proteomes" id="UP000005640">
    <property type="component" value="Chromosome 17"/>
</dbReference>
<dbReference type="RNAct" id="Q02978">
    <property type="molecule type" value="protein"/>
</dbReference>
<dbReference type="Bgee" id="ENSG00000108528">
    <property type="expression patterns" value="Expressed in apex of heart and 206 other cell types or tissues"/>
</dbReference>
<dbReference type="ExpressionAtlas" id="Q02978">
    <property type="expression patterns" value="baseline and differential"/>
</dbReference>
<dbReference type="GO" id="GO:0005743">
    <property type="term" value="C:mitochondrial inner membrane"/>
    <property type="evidence" value="ECO:0000304"/>
    <property type="project" value="Reactome"/>
</dbReference>
<dbReference type="GO" id="GO:0005739">
    <property type="term" value="C:mitochondrion"/>
    <property type="evidence" value="ECO:0007005"/>
    <property type="project" value="UniProtKB"/>
</dbReference>
<dbReference type="GO" id="GO:0005634">
    <property type="term" value="C:nucleus"/>
    <property type="evidence" value="ECO:0007005"/>
    <property type="project" value="UniProtKB"/>
</dbReference>
<dbReference type="GO" id="GO:0005886">
    <property type="term" value="C:plasma membrane"/>
    <property type="evidence" value="ECO:0000304"/>
    <property type="project" value="ProtInc"/>
</dbReference>
<dbReference type="GO" id="GO:0015367">
    <property type="term" value="F:oxoglutarate:malate antiporter activity"/>
    <property type="evidence" value="ECO:0000304"/>
    <property type="project" value="ProtInc"/>
</dbReference>
<dbReference type="GO" id="GO:0003723">
    <property type="term" value="F:RNA binding"/>
    <property type="evidence" value="ECO:0007005"/>
    <property type="project" value="UniProtKB"/>
</dbReference>
<dbReference type="GO" id="GO:0022857">
    <property type="term" value="F:transmembrane transporter activity"/>
    <property type="evidence" value="ECO:0000318"/>
    <property type="project" value="GO_Central"/>
</dbReference>
<dbReference type="GO" id="GO:0006094">
    <property type="term" value="P:gluconeogenesis"/>
    <property type="evidence" value="ECO:0007669"/>
    <property type="project" value="Ensembl"/>
</dbReference>
<dbReference type="GO" id="GO:0006869">
    <property type="term" value="P:lipid transport"/>
    <property type="evidence" value="ECO:0007669"/>
    <property type="project" value="UniProtKB-KW"/>
</dbReference>
<dbReference type="GO" id="GO:0043490">
    <property type="term" value="P:malate-aspartate shuttle"/>
    <property type="evidence" value="ECO:0000315"/>
    <property type="project" value="FlyBase"/>
</dbReference>
<dbReference type="FunFam" id="1.50.40.10:FF:000013">
    <property type="entry name" value="Mitochondrial 2-oxoglutarate/malate carrier protein-like protein"/>
    <property type="match status" value="1"/>
</dbReference>
<dbReference type="Gene3D" id="1.50.40.10">
    <property type="entry name" value="Mitochondrial carrier domain"/>
    <property type="match status" value="1"/>
</dbReference>
<dbReference type="InterPro" id="IPR050391">
    <property type="entry name" value="Mito_Metabolite_Transporter"/>
</dbReference>
<dbReference type="InterPro" id="IPR018108">
    <property type="entry name" value="Mitochondrial_sb/sol_carrier"/>
</dbReference>
<dbReference type="InterPro" id="IPR023395">
    <property type="entry name" value="Mt_carrier_dom_sf"/>
</dbReference>
<dbReference type="PANTHER" id="PTHR45618">
    <property type="entry name" value="MITOCHONDRIAL DICARBOXYLATE CARRIER-RELATED"/>
    <property type="match status" value="1"/>
</dbReference>
<dbReference type="Pfam" id="PF00153">
    <property type="entry name" value="Mito_carr"/>
    <property type="match status" value="3"/>
</dbReference>
<dbReference type="SUPFAM" id="SSF103506">
    <property type="entry name" value="Mitochondrial carrier"/>
    <property type="match status" value="1"/>
</dbReference>
<dbReference type="PROSITE" id="PS50920">
    <property type="entry name" value="SOLCAR"/>
    <property type="match status" value="3"/>
</dbReference>
<gene>
    <name type="primary">SLC25A11</name>
    <name type="synonym">SLC20A4</name>
</gene>
<evidence type="ECO:0000250" key="1">
    <source>
        <dbReference type="UniProtKB" id="P22292"/>
    </source>
</evidence>
<evidence type="ECO:0000250" key="2">
    <source>
        <dbReference type="UniProtKB" id="P97700"/>
    </source>
</evidence>
<evidence type="ECO:0000250" key="3">
    <source>
        <dbReference type="UniProtKB" id="Q9CR62"/>
    </source>
</evidence>
<evidence type="ECO:0000255" key="4"/>
<evidence type="ECO:0000269" key="5">
    <source>
    </source>
</evidence>
<evidence type="ECO:0000269" key="6">
    <source>
    </source>
</evidence>
<evidence type="ECO:0000269" key="7">
    <source>
    </source>
</evidence>
<evidence type="ECO:0000269" key="8">
    <source ref="5"/>
</evidence>
<evidence type="ECO:0000303" key="9">
    <source>
    </source>
</evidence>
<evidence type="ECO:0000303" key="10">
    <source>
    </source>
</evidence>
<evidence type="ECO:0000305" key="11"/>
<evidence type="ECO:0007744" key="12">
    <source>
    </source>
</evidence>
<evidence type="ECO:0007744" key="13">
    <source>
    </source>
</evidence>
<evidence type="ECO:0007744" key="14">
    <source>
    </source>
</evidence>
<evidence type="ECO:0007744" key="15">
    <source>
    </source>
</evidence>
<evidence type="ECO:0007744" key="16">
    <source>
    </source>
</evidence>
<evidence type="ECO:0007744" key="17">
    <source>
    </source>
</evidence>
<sequence>MAATASAGAGGIDGKPRTSPKSVKFLFGGLAGMGATVFVQPLDLVKNRMQLSGEGAKTREYKTSFHALTSILKAEGLRGIYTGLSAGLLRQATYTTTRLGIYTVLFERLTGADGTPPGFLLKAVIGMTAGATGAFVGTPAEVALIRMTADGRLPADQRRGYKNVFNALIRITREEGVLTLWRGCIPTMARAVVVNAAQLASYSQSKQFLLDSGYFSDNILCHFCASMISGLVTTAASMPVDIAKTRIQNMRMIDGKPEYKNGLDVLFKVVRYEGFFSLWKGFTPYYARLGPHTVLTFIFLEQMNKAYKRLFLSG</sequence>
<name>M2OM_HUMAN</name>
<reference key="1">
    <citation type="journal article" date="1992" name="DNA Seq.">
        <title>Sequences of the human and bovine genes for the mitochondrial 2-oxoglutarate carrier.</title>
        <authorList>
            <person name="Iacobazzi V."/>
            <person name="Palmieri F."/>
            <person name="Runswick M.J."/>
            <person name="Walker J.E."/>
        </authorList>
    </citation>
    <scope>NUCLEOTIDE SEQUENCE [GENOMIC DNA]</scope>
</reference>
<reference key="2">
    <citation type="submission" date="1998-06" db="EMBL/GenBank/DDBJ databases">
        <authorList>
            <person name="Yu W."/>
            <person name="Gibbs R.A."/>
        </authorList>
    </citation>
    <scope>NUCLEOTIDE SEQUENCE [LARGE SCALE MRNA]</scope>
    <source>
        <tissue>Brain</tissue>
    </source>
</reference>
<reference key="3">
    <citation type="journal article" date="2006" name="Nature">
        <title>DNA sequence of human chromosome 17 and analysis of rearrangement in the human lineage.</title>
        <authorList>
            <person name="Zody M.C."/>
            <person name="Garber M."/>
            <person name="Adams D.J."/>
            <person name="Sharpe T."/>
            <person name="Harrow J."/>
            <person name="Lupski J.R."/>
            <person name="Nicholson C."/>
            <person name="Searle S.M."/>
            <person name="Wilming L."/>
            <person name="Young S.K."/>
            <person name="Abouelleil A."/>
            <person name="Allen N.R."/>
            <person name="Bi W."/>
            <person name="Bloom T."/>
            <person name="Borowsky M.L."/>
            <person name="Bugalter B.E."/>
            <person name="Butler J."/>
            <person name="Chang J.L."/>
            <person name="Chen C.-K."/>
            <person name="Cook A."/>
            <person name="Corum B."/>
            <person name="Cuomo C.A."/>
            <person name="de Jong P.J."/>
            <person name="DeCaprio D."/>
            <person name="Dewar K."/>
            <person name="FitzGerald M."/>
            <person name="Gilbert J."/>
            <person name="Gibson R."/>
            <person name="Gnerre S."/>
            <person name="Goldstein S."/>
            <person name="Grafham D.V."/>
            <person name="Grocock R."/>
            <person name="Hafez N."/>
            <person name="Hagopian D.S."/>
            <person name="Hart E."/>
            <person name="Norman C.H."/>
            <person name="Humphray S."/>
            <person name="Jaffe D.B."/>
            <person name="Jones M."/>
            <person name="Kamal M."/>
            <person name="Khodiyar V.K."/>
            <person name="LaButti K."/>
            <person name="Laird G."/>
            <person name="Lehoczky J."/>
            <person name="Liu X."/>
            <person name="Lokyitsang T."/>
            <person name="Loveland J."/>
            <person name="Lui A."/>
            <person name="Macdonald P."/>
            <person name="Major J.E."/>
            <person name="Matthews L."/>
            <person name="Mauceli E."/>
            <person name="McCarroll S.A."/>
            <person name="Mihalev A.H."/>
            <person name="Mudge J."/>
            <person name="Nguyen C."/>
            <person name="Nicol R."/>
            <person name="O'Leary S.B."/>
            <person name="Osoegawa K."/>
            <person name="Schwartz D.C."/>
            <person name="Shaw-Smith C."/>
            <person name="Stankiewicz P."/>
            <person name="Steward C."/>
            <person name="Swarbreck D."/>
            <person name="Venkataraman V."/>
            <person name="Whittaker C.A."/>
            <person name="Yang X."/>
            <person name="Zimmer A.R."/>
            <person name="Bradley A."/>
            <person name="Hubbard T."/>
            <person name="Birren B.W."/>
            <person name="Rogers J."/>
            <person name="Lander E.S."/>
            <person name="Nusbaum C."/>
        </authorList>
    </citation>
    <scope>NUCLEOTIDE SEQUENCE [LARGE SCALE GENOMIC DNA]</scope>
</reference>
<reference key="4">
    <citation type="journal article" date="2004" name="Genome Res.">
        <title>The status, quality, and expansion of the NIH full-length cDNA project: the Mammalian Gene Collection (MGC).</title>
        <authorList>
            <consortium name="The MGC Project Team"/>
        </authorList>
    </citation>
    <scope>NUCLEOTIDE SEQUENCE [LARGE SCALE MRNA]</scope>
    <source>
        <tissue>Muscle</tissue>
        <tissue>Uterus</tissue>
    </source>
</reference>
<reference key="5">
    <citation type="submission" date="2005-06" db="UniProtKB">
        <authorList>
            <person name="Bienvenut W.V."/>
        </authorList>
    </citation>
    <scope>PROTEIN SEQUENCE OF 2-17</scope>
    <scope>CLEAVAGE OF INITIATOR METHIONINE</scope>
    <scope>ACETYLATION AT ALA-2</scope>
    <scope>IDENTIFICATION BY MASS SPECTROMETRY</scope>
    <source>
        <tissue>B-cell lymphoma</tissue>
    </source>
</reference>
<reference key="6">
    <citation type="journal article" date="2009" name="Anal. Chem.">
        <title>Lys-N and trypsin cover complementary parts of the phosphoproteome in a refined SCX-based approach.</title>
        <authorList>
            <person name="Gauci S."/>
            <person name="Helbig A.O."/>
            <person name="Slijper M."/>
            <person name="Krijgsveld J."/>
            <person name="Heck A.J."/>
            <person name="Mohammed S."/>
        </authorList>
    </citation>
    <scope>ACETYLATION [LARGE SCALE ANALYSIS] AT ALA-2</scope>
    <scope>CLEAVAGE OF INITIATOR METHIONINE [LARGE SCALE ANALYSIS]</scope>
    <scope>IDENTIFICATION BY MASS SPECTROMETRY [LARGE SCALE ANALYSIS]</scope>
</reference>
<reference key="7">
    <citation type="journal article" date="2009" name="Science">
        <title>Lysine acetylation targets protein complexes and co-regulates major cellular functions.</title>
        <authorList>
            <person name="Choudhary C."/>
            <person name="Kumar C."/>
            <person name="Gnad F."/>
            <person name="Nielsen M.L."/>
            <person name="Rehman M."/>
            <person name="Walther T.C."/>
            <person name="Olsen J.V."/>
            <person name="Mann M."/>
        </authorList>
    </citation>
    <scope>ACETYLATION [LARGE SCALE ANALYSIS] AT LYS-73</scope>
    <scope>IDENTIFICATION BY MASS SPECTROMETRY [LARGE SCALE ANALYSIS]</scope>
</reference>
<reference key="8">
    <citation type="journal article" date="2011" name="BMC Syst. Biol.">
        <title>Initial characterization of the human central proteome.</title>
        <authorList>
            <person name="Burkard T.R."/>
            <person name="Planyavsky M."/>
            <person name="Kaupe I."/>
            <person name="Breitwieser F.P."/>
            <person name="Buerckstuemmer T."/>
            <person name="Bennett K.L."/>
            <person name="Superti-Furga G."/>
            <person name="Colinge J."/>
        </authorList>
    </citation>
    <scope>IDENTIFICATION BY MASS SPECTROMETRY [LARGE SCALE ANALYSIS]</scope>
</reference>
<reference key="9">
    <citation type="journal article" date="2011" name="PLoS ONE">
        <title>MISC-1/OGC links mitochondrial metabolism, apoptosis and insulin secretion.</title>
        <authorList>
            <person name="Gallo M."/>
            <person name="Park D."/>
            <person name="Luciani D.S."/>
            <person name="Kida K."/>
            <person name="Palmieri F."/>
            <person name="Blacque O.E."/>
            <person name="Johnson J.D."/>
            <person name="Riddle D.L."/>
        </authorList>
    </citation>
    <scope>FUNCTION</scope>
    <scope>TISSUE SPECIFICITY</scope>
</reference>
<reference key="10">
    <citation type="journal article" date="2012" name="Mol. Cell. Proteomics">
        <title>Comparative large-scale characterisation of plant vs. mammal proteins reveals similar and idiosyncratic N-alpha acetylation features.</title>
        <authorList>
            <person name="Bienvenut W.V."/>
            <person name="Sumpton D."/>
            <person name="Martinez A."/>
            <person name="Lilla S."/>
            <person name="Espagne C."/>
            <person name="Meinnel T."/>
            <person name="Giglione C."/>
        </authorList>
    </citation>
    <scope>ACETYLATION [LARGE SCALE ANALYSIS] AT ALA-2</scope>
    <scope>CLEAVAGE OF INITIATOR METHIONINE [LARGE SCALE ANALYSIS]</scope>
    <scope>IDENTIFICATION BY MASS SPECTROMETRY [LARGE SCALE ANALYSIS]</scope>
</reference>
<reference key="11">
    <citation type="journal article" date="2012" name="Proc. Natl. Acad. Sci. U.S.A.">
        <title>N-terminal acetylome analyses and functional insights of the N-terminal acetyltransferase NatB.</title>
        <authorList>
            <person name="Van Damme P."/>
            <person name="Lasa M."/>
            <person name="Polevoda B."/>
            <person name="Gazquez C."/>
            <person name="Elosegui-Artola A."/>
            <person name="Kim D.S."/>
            <person name="De Juan-Pardo E."/>
            <person name="Demeyer K."/>
            <person name="Hole K."/>
            <person name="Larrea E."/>
            <person name="Timmerman E."/>
            <person name="Prieto J."/>
            <person name="Arnesen T."/>
            <person name="Sherman F."/>
            <person name="Gevaert K."/>
            <person name="Aldabe R."/>
        </authorList>
    </citation>
    <scope>ACETYLATION [LARGE SCALE ANALYSIS] AT ALA-2</scope>
    <scope>CLEAVAGE OF INITIATOR METHIONINE [LARGE SCALE ANALYSIS]</scope>
    <scope>IDENTIFICATION BY MASS SPECTROMETRY [LARGE SCALE ANALYSIS]</scope>
</reference>
<reference key="12">
    <citation type="journal article" date="2013" name="J. Proteome Res.">
        <title>Toward a comprehensive characterization of a human cancer cell phosphoproteome.</title>
        <authorList>
            <person name="Zhou H."/>
            <person name="Di Palma S."/>
            <person name="Preisinger C."/>
            <person name="Peng M."/>
            <person name="Polat A.N."/>
            <person name="Heck A.J."/>
            <person name="Mohammed S."/>
        </authorList>
    </citation>
    <scope>PHOSPHORYLATION [LARGE SCALE ANALYSIS] AT SER-6</scope>
    <scope>IDENTIFICATION BY MASS SPECTROMETRY [LARGE SCALE ANALYSIS]</scope>
    <source>
        <tissue>Cervix carcinoma</tissue>
        <tissue>Erythroleukemia</tissue>
    </source>
</reference>
<reference key="13">
    <citation type="journal article" date="2014" name="J. Proteomics">
        <title>An enzyme assisted RP-RPLC approach for in-depth analysis of human liver phosphoproteome.</title>
        <authorList>
            <person name="Bian Y."/>
            <person name="Song C."/>
            <person name="Cheng K."/>
            <person name="Dong M."/>
            <person name="Wang F."/>
            <person name="Huang J."/>
            <person name="Sun D."/>
            <person name="Wang L."/>
            <person name="Ye M."/>
            <person name="Zou H."/>
        </authorList>
    </citation>
    <scope>IDENTIFICATION BY MASS SPECTROMETRY [LARGE SCALE ANALYSIS]</scope>
    <source>
        <tissue>Liver</tissue>
    </source>
</reference>
<reference key="14">
    <citation type="journal article" date="2015" name="Proteomics">
        <title>N-terminome analysis of the human mitochondrial proteome.</title>
        <authorList>
            <person name="Vaca Jacome A.S."/>
            <person name="Rabilloud T."/>
            <person name="Schaeffer-Reiss C."/>
            <person name="Rompais M."/>
            <person name="Ayoub D."/>
            <person name="Lane L."/>
            <person name="Bairoch A."/>
            <person name="Van Dorsselaer A."/>
            <person name="Carapito C."/>
        </authorList>
    </citation>
    <scope>ACETYLATION [LARGE SCALE ANALYSIS] AT ALA-2</scope>
    <scope>CLEAVAGE OF INITIATOR METHIONINE [LARGE SCALE ANALYSIS]</scope>
    <scope>IDENTIFICATION BY MASS SPECTROMETRY [LARGE SCALE ANALYSIS]</scope>
</reference>
<reference key="15">
    <citation type="journal article" date="2023" name="EMBO Rep.">
        <title>LINC00493-encoded microprotein SMIM26 exerts anti-metastatic activity in renal cell carcinoma.</title>
        <authorList>
            <person name="Meng K."/>
            <person name="Lu S."/>
            <person name="Li Y.Y."/>
            <person name="Hu L.L."/>
            <person name="Zhang J."/>
            <person name="Cao Y."/>
            <person name="Wang Y."/>
            <person name="Zhang C.Z."/>
            <person name="He Q.Y."/>
        </authorList>
    </citation>
    <scope>INTERACTION WITH SMIM26</scope>
</reference>
<reference key="16">
    <citation type="journal article" date="2018" name="Cancer Res.">
        <title>Germline Mutations in the Mitochondrial 2-Oxoglutarate/Malate Carrier SLC25A11 Gene Confer a Predisposition to Metastatic Paragangliomas.</title>
        <authorList>
            <person name="Buffet A."/>
            <person name="Morin A."/>
            <person name="Castro-Vega L.J."/>
            <person name="Habarou F."/>
            <person name="Lussey-Lepoutre C."/>
            <person name="Letouze E."/>
            <person name="Lefebvre H."/>
            <person name="Guilhem I."/>
            <person name="Haissaguerre M."/>
            <person name="Raingeard I."/>
            <person name="Padilla-Girola M."/>
            <person name="Tran T."/>
            <person name="Tchara L."/>
            <person name="Bertherat J."/>
            <person name="Amar L."/>
            <person name="Ottolenghi C."/>
            <person name="Burnichon N."/>
            <person name="Gimenez-Roqueplo A.P."/>
            <person name="Favier J."/>
        </authorList>
    </citation>
    <scope>INVOLVEMENT IN PPGL6</scope>
    <scope>VARIANTS PGL6 LYS-141; VAL-147 AND THR-239</scope>
    <scope>CHARACTERIZATION OF VARIANTS PPGL6 LYS-141; VAL-147 AND THR-239</scope>
    <scope>FUNCTION</scope>
</reference>
<feature type="initiator methionine" description="Removed" evidence="8 12 14 15 17">
    <location>
        <position position="1"/>
    </location>
</feature>
<feature type="chain" id="PRO_0000090625" description="Mitochondrial 2-oxoglutarate/malate carrier protein">
    <location>
        <begin position="2"/>
        <end position="314"/>
    </location>
</feature>
<feature type="transmembrane region" description="Helical; Name=1" evidence="4">
    <location>
        <begin position="24"/>
        <end position="42"/>
    </location>
</feature>
<feature type="transmembrane region" description="Helical; Name=2" evidence="4">
    <location>
        <begin position="83"/>
        <end position="101"/>
    </location>
</feature>
<feature type="transmembrane region" description="Helical; Name=3" evidence="4">
    <location>
        <begin position="119"/>
        <end position="140"/>
    </location>
</feature>
<feature type="transmembrane region" description="Helical; Name=4" evidence="4">
    <location>
        <begin position="183"/>
        <end position="202"/>
    </location>
</feature>
<feature type="transmembrane region" description="Helical; Name=5" evidence="4">
    <location>
        <begin position="222"/>
        <end position="240"/>
    </location>
</feature>
<feature type="transmembrane region" description="Helical; Name=6" evidence="4">
    <location>
        <begin position="281"/>
        <end position="300"/>
    </location>
</feature>
<feature type="repeat" description="Solcar 1">
    <location>
        <begin position="23"/>
        <end position="108"/>
    </location>
</feature>
<feature type="repeat" description="Solcar 2">
    <location>
        <begin position="117"/>
        <end position="208"/>
    </location>
</feature>
<feature type="repeat" description="Solcar 3">
    <location>
        <begin position="217"/>
        <end position="306"/>
    </location>
</feature>
<feature type="modified residue" description="N-acetylalanine" evidence="8 12 14 15 17">
    <location>
        <position position="2"/>
    </location>
</feature>
<feature type="modified residue" description="Phosphoserine" evidence="16">
    <location>
        <position position="6"/>
    </location>
</feature>
<feature type="modified residue" description="N6-succinyllysine" evidence="3">
    <location>
        <position position="57"/>
    </location>
</feature>
<feature type="modified residue" description="N6-acetyllysine" evidence="13">
    <location>
        <position position="73"/>
    </location>
</feature>
<feature type="modified residue" description="Phosphotyrosine" evidence="3">
    <location>
        <position position="102"/>
    </location>
</feature>
<feature type="modified residue" description="N6-acetyllysine" evidence="3">
    <location>
        <position position="256"/>
    </location>
</feature>
<feature type="splice variant" id="VSP_046745" description="In isoform 2." evidence="11">
    <location>
        <begin position="32"/>
        <end position="82"/>
    </location>
</feature>
<feature type="sequence variant" id="VAR_082966" description="In PPGL6; loss of protein expression; dbSNP:rs1567651815." evidence="6">
    <original>E</original>
    <variation>K</variation>
    <location>
        <position position="141"/>
    </location>
</feature>
<feature type="sequence variant" id="VAR_082967" description="In PPGL6; loss of protein expression; dbSNP:rs1203876038." evidence="6">
    <original>M</original>
    <variation>V</variation>
    <location>
        <position position="147"/>
    </location>
</feature>
<feature type="sequence variant" id="VAR_082968" description="In PPGL6; loss of protein expression; dbSNP:rs1567650859." evidence="6">
    <original>P</original>
    <variation>T</variation>
    <location>
        <position position="239"/>
    </location>
</feature>
<feature type="sequence conflict" description="In Ref. 1; CAA46905." evidence="11" ref="1">
    <original>I</original>
    <variation>M</variation>
    <location>
        <position position="12"/>
    </location>
</feature>